<name>ENO_SHESM</name>
<comment type="function">
    <text evidence="1">Catalyzes the reversible conversion of 2-phosphoglycerate (2-PG) into phosphoenolpyruvate (PEP). It is essential for the degradation of carbohydrates via glycolysis.</text>
</comment>
<comment type="catalytic activity">
    <reaction evidence="1">
        <text>(2R)-2-phosphoglycerate = phosphoenolpyruvate + H2O</text>
        <dbReference type="Rhea" id="RHEA:10164"/>
        <dbReference type="ChEBI" id="CHEBI:15377"/>
        <dbReference type="ChEBI" id="CHEBI:58289"/>
        <dbReference type="ChEBI" id="CHEBI:58702"/>
        <dbReference type="EC" id="4.2.1.11"/>
    </reaction>
</comment>
<comment type="cofactor">
    <cofactor evidence="1">
        <name>Mg(2+)</name>
        <dbReference type="ChEBI" id="CHEBI:18420"/>
    </cofactor>
    <text evidence="1">Binds a second Mg(2+) ion via substrate during catalysis.</text>
</comment>
<comment type="pathway">
    <text evidence="1">Carbohydrate degradation; glycolysis; pyruvate from D-glyceraldehyde 3-phosphate: step 4/5.</text>
</comment>
<comment type="subunit">
    <text evidence="1">Component of the RNA degradosome, a multiprotein complex involved in RNA processing and mRNA degradation.</text>
</comment>
<comment type="subcellular location">
    <subcellularLocation>
        <location evidence="1">Cytoplasm</location>
    </subcellularLocation>
    <subcellularLocation>
        <location evidence="1">Secreted</location>
    </subcellularLocation>
    <subcellularLocation>
        <location evidence="1">Cell surface</location>
    </subcellularLocation>
    <text evidence="1">Fractions of enolase are present in both the cytoplasm and on the cell surface.</text>
</comment>
<comment type="similarity">
    <text evidence="1">Belongs to the enolase family.</text>
</comment>
<organism>
    <name type="scientific">Shewanella sp. (strain MR-4)</name>
    <dbReference type="NCBI Taxonomy" id="60480"/>
    <lineage>
        <taxon>Bacteria</taxon>
        <taxon>Pseudomonadati</taxon>
        <taxon>Pseudomonadota</taxon>
        <taxon>Gammaproteobacteria</taxon>
        <taxon>Alteromonadales</taxon>
        <taxon>Shewanellaceae</taxon>
        <taxon>Shewanella</taxon>
    </lineage>
</organism>
<reference key="1">
    <citation type="submission" date="2006-08" db="EMBL/GenBank/DDBJ databases">
        <title>Complete sequence of Shewanella sp. MR-4.</title>
        <authorList>
            <consortium name="US DOE Joint Genome Institute"/>
            <person name="Copeland A."/>
            <person name="Lucas S."/>
            <person name="Lapidus A."/>
            <person name="Barry K."/>
            <person name="Detter J.C."/>
            <person name="Glavina del Rio T."/>
            <person name="Hammon N."/>
            <person name="Israni S."/>
            <person name="Dalin E."/>
            <person name="Tice H."/>
            <person name="Pitluck S."/>
            <person name="Kiss H."/>
            <person name="Brettin T."/>
            <person name="Bruce D."/>
            <person name="Han C."/>
            <person name="Tapia R."/>
            <person name="Gilna P."/>
            <person name="Schmutz J."/>
            <person name="Larimer F."/>
            <person name="Land M."/>
            <person name="Hauser L."/>
            <person name="Kyrpides N."/>
            <person name="Mikhailova N."/>
            <person name="Nealson K."/>
            <person name="Konstantinidis K."/>
            <person name="Klappenbach J."/>
            <person name="Tiedje J."/>
            <person name="Richardson P."/>
        </authorList>
    </citation>
    <scope>NUCLEOTIDE SEQUENCE [LARGE SCALE GENOMIC DNA]</scope>
    <source>
        <strain>MR-4</strain>
    </source>
</reference>
<proteinExistence type="inferred from homology"/>
<feature type="chain" id="PRO_0000267102" description="Enolase">
    <location>
        <begin position="1"/>
        <end position="431"/>
    </location>
</feature>
<feature type="active site" description="Proton donor" evidence="1">
    <location>
        <position position="209"/>
    </location>
</feature>
<feature type="active site" description="Proton acceptor" evidence="1">
    <location>
        <position position="341"/>
    </location>
</feature>
<feature type="binding site" evidence="1">
    <location>
        <position position="167"/>
    </location>
    <ligand>
        <name>(2R)-2-phosphoglycerate</name>
        <dbReference type="ChEBI" id="CHEBI:58289"/>
    </ligand>
</feature>
<feature type="binding site" evidence="1">
    <location>
        <position position="246"/>
    </location>
    <ligand>
        <name>Mg(2+)</name>
        <dbReference type="ChEBI" id="CHEBI:18420"/>
    </ligand>
</feature>
<feature type="binding site" evidence="1">
    <location>
        <position position="289"/>
    </location>
    <ligand>
        <name>Mg(2+)</name>
        <dbReference type="ChEBI" id="CHEBI:18420"/>
    </ligand>
</feature>
<feature type="binding site" evidence="1">
    <location>
        <position position="316"/>
    </location>
    <ligand>
        <name>Mg(2+)</name>
        <dbReference type="ChEBI" id="CHEBI:18420"/>
    </ligand>
</feature>
<feature type="binding site" evidence="1">
    <location>
        <position position="341"/>
    </location>
    <ligand>
        <name>(2R)-2-phosphoglycerate</name>
        <dbReference type="ChEBI" id="CHEBI:58289"/>
    </ligand>
</feature>
<feature type="binding site" evidence="1">
    <location>
        <position position="370"/>
    </location>
    <ligand>
        <name>(2R)-2-phosphoglycerate</name>
        <dbReference type="ChEBI" id="CHEBI:58289"/>
    </ligand>
</feature>
<feature type="binding site" evidence="1">
    <location>
        <position position="371"/>
    </location>
    <ligand>
        <name>(2R)-2-phosphoglycerate</name>
        <dbReference type="ChEBI" id="CHEBI:58289"/>
    </ligand>
</feature>
<feature type="binding site" evidence="1">
    <location>
        <position position="392"/>
    </location>
    <ligand>
        <name>(2R)-2-phosphoglycerate</name>
        <dbReference type="ChEBI" id="CHEBI:58289"/>
    </ligand>
</feature>
<gene>
    <name evidence="1" type="primary">eno</name>
    <name type="ordered locus">Shewmr4_1115</name>
</gene>
<protein>
    <recommendedName>
        <fullName evidence="1">Enolase</fullName>
        <ecNumber evidence="1">4.2.1.11</ecNumber>
    </recommendedName>
    <alternativeName>
        <fullName evidence="1">2-phospho-D-glycerate hydro-lyase</fullName>
    </alternativeName>
    <alternativeName>
        <fullName evidence="1">2-phosphoglycerate dehydratase</fullName>
    </alternativeName>
</protein>
<accession>Q0HL72</accession>
<dbReference type="EC" id="4.2.1.11" evidence="1"/>
<dbReference type="EMBL" id="CP000446">
    <property type="protein sequence ID" value="ABI38195.1"/>
    <property type="molecule type" value="Genomic_DNA"/>
</dbReference>
<dbReference type="RefSeq" id="WP_011621904.1">
    <property type="nucleotide sequence ID" value="NC_008321.1"/>
</dbReference>
<dbReference type="SMR" id="Q0HL72"/>
<dbReference type="GeneID" id="94727115"/>
<dbReference type="KEGG" id="she:Shewmr4_1115"/>
<dbReference type="HOGENOM" id="CLU_031223_2_1_6"/>
<dbReference type="UniPathway" id="UPA00109">
    <property type="reaction ID" value="UER00187"/>
</dbReference>
<dbReference type="GO" id="GO:0009986">
    <property type="term" value="C:cell surface"/>
    <property type="evidence" value="ECO:0007669"/>
    <property type="project" value="UniProtKB-SubCell"/>
</dbReference>
<dbReference type="GO" id="GO:0005576">
    <property type="term" value="C:extracellular region"/>
    <property type="evidence" value="ECO:0007669"/>
    <property type="project" value="UniProtKB-SubCell"/>
</dbReference>
<dbReference type="GO" id="GO:0000015">
    <property type="term" value="C:phosphopyruvate hydratase complex"/>
    <property type="evidence" value="ECO:0007669"/>
    <property type="project" value="InterPro"/>
</dbReference>
<dbReference type="GO" id="GO:0000287">
    <property type="term" value="F:magnesium ion binding"/>
    <property type="evidence" value="ECO:0007669"/>
    <property type="project" value="UniProtKB-UniRule"/>
</dbReference>
<dbReference type="GO" id="GO:0004634">
    <property type="term" value="F:phosphopyruvate hydratase activity"/>
    <property type="evidence" value="ECO:0007669"/>
    <property type="project" value="UniProtKB-UniRule"/>
</dbReference>
<dbReference type="GO" id="GO:0006096">
    <property type="term" value="P:glycolytic process"/>
    <property type="evidence" value="ECO:0007669"/>
    <property type="project" value="UniProtKB-UniRule"/>
</dbReference>
<dbReference type="CDD" id="cd03313">
    <property type="entry name" value="enolase"/>
    <property type="match status" value="1"/>
</dbReference>
<dbReference type="FunFam" id="3.20.20.120:FF:000001">
    <property type="entry name" value="Enolase"/>
    <property type="match status" value="1"/>
</dbReference>
<dbReference type="FunFam" id="3.30.390.10:FF:000001">
    <property type="entry name" value="Enolase"/>
    <property type="match status" value="1"/>
</dbReference>
<dbReference type="Gene3D" id="3.20.20.120">
    <property type="entry name" value="Enolase-like C-terminal domain"/>
    <property type="match status" value="1"/>
</dbReference>
<dbReference type="Gene3D" id="3.30.390.10">
    <property type="entry name" value="Enolase-like, N-terminal domain"/>
    <property type="match status" value="1"/>
</dbReference>
<dbReference type="HAMAP" id="MF_00318">
    <property type="entry name" value="Enolase"/>
    <property type="match status" value="1"/>
</dbReference>
<dbReference type="InterPro" id="IPR000941">
    <property type="entry name" value="Enolase"/>
</dbReference>
<dbReference type="InterPro" id="IPR036849">
    <property type="entry name" value="Enolase-like_C_sf"/>
</dbReference>
<dbReference type="InterPro" id="IPR029017">
    <property type="entry name" value="Enolase-like_N"/>
</dbReference>
<dbReference type="InterPro" id="IPR020810">
    <property type="entry name" value="Enolase_C"/>
</dbReference>
<dbReference type="InterPro" id="IPR020809">
    <property type="entry name" value="Enolase_CS"/>
</dbReference>
<dbReference type="InterPro" id="IPR020811">
    <property type="entry name" value="Enolase_N"/>
</dbReference>
<dbReference type="NCBIfam" id="TIGR01060">
    <property type="entry name" value="eno"/>
    <property type="match status" value="1"/>
</dbReference>
<dbReference type="PANTHER" id="PTHR11902">
    <property type="entry name" value="ENOLASE"/>
    <property type="match status" value="1"/>
</dbReference>
<dbReference type="PANTHER" id="PTHR11902:SF1">
    <property type="entry name" value="ENOLASE"/>
    <property type="match status" value="1"/>
</dbReference>
<dbReference type="Pfam" id="PF00113">
    <property type="entry name" value="Enolase_C"/>
    <property type="match status" value="1"/>
</dbReference>
<dbReference type="Pfam" id="PF03952">
    <property type="entry name" value="Enolase_N"/>
    <property type="match status" value="1"/>
</dbReference>
<dbReference type="PIRSF" id="PIRSF001400">
    <property type="entry name" value="Enolase"/>
    <property type="match status" value="1"/>
</dbReference>
<dbReference type="PRINTS" id="PR00148">
    <property type="entry name" value="ENOLASE"/>
</dbReference>
<dbReference type="SFLD" id="SFLDF00002">
    <property type="entry name" value="enolase"/>
    <property type="match status" value="1"/>
</dbReference>
<dbReference type="SFLD" id="SFLDG00178">
    <property type="entry name" value="enolase"/>
    <property type="match status" value="1"/>
</dbReference>
<dbReference type="SMART" id="SM01192">
    <property type="entry name" value="Enolase_C"/>
    <property type="match status" value="1"/>
</dbReference>
<dbReference type="SMART" id="SM01193">
    <property type="entry name" value="Enolase_N"/>
    <property type="match status" value="1"/>
</dbReference>
<dbReference type="SUPFAM" id="SSF51604">
    <property type="entry name" value="Enolase C-terminal domain-like"/>
    <property type="match status" value="1"/>
</dbReference>
<dbReference type="SUPFAM" id="SSF54826">
    <property type="entry name" value="Enolase N-terminal domain-like"/>
    <property type="match status" value="1"/>
</dbReference>
<dbReference type="PROSITE" id="PS00164">
    <property type="entry name" value="ENOLASE"/>
    <property type="match status" value="1"/>
</dbReference>
<keyword id="KW-0963">Cytoplasm</keyword>
<keyword id="KW-0324">Glycolysis</keyword>
<keyword id="KW-0456">Lyase</keyword>
<keyword id="KW-0460">Magnesium</keyword>
<keyword id="KW-0479">Metal-binding</keyword>
<keyword id="KW-0964">Secreted</keyword>
<evidence type="ECO:0000255" key="1">
    <source>
        <dbReference type="HAMAP-Rule" id="MF_00318"/>
    </source>
</evidence>
<sequence length="431" mass="45673">MAKIINVIGREIMDSRGNPTVEAEVHLEGGFIGMAAAPSGASTGSREALELRDGDKSRYLGKGVLTAVANVNGPIRAALIGKDATAQAELDQIMIDLDGTENKDKLGANAILAVSLAAAKAAAAFKGMPLYAHIAELNGTPGQYAMPVPMMNILNGGEHADNNVDIQEFMVQPVGAKNFREALRMGAEIFHTLKKVLHGKGLSTSVGDEGGFAPNLSSNADALAVIKEAVELAGYKLGTDVTLALDCAASEFYKDGKYDLSGEGKVFDSNGFSDFLKSLTEQYPIVSIEDGLDESDWDGWAYQTKIMGDKIQLVGDDLFVTNTKILTRGIENGIANSILIKFNQIGSLTETLAAIRMAKAAGYTAVISHRSGETEDATIADLAVGTAAGQIKTGSLCRSDRVAKYNQLLRIEEQLGEKAPYRGLKEIKGQA</sequence>